<sequence length="299" mass="34430">MKPDAHHVKQFLLRLQDDICQTLSAVDGANFVEDSWRREAGGGGRSRVLRNGGIFEQAGVNFSHVHGDAMPASATAHRPELAGRSFEAMGVSLVVHPHNPYIPTSHANVRFFIAEKPGADPVWWFGGGFDLTPYYGFEEDAVHWHRTARDLCQPFGDDVYPRYKKWCDDYFFLKHRNEQRGVGGLFFDDLNTPDFDHCFDFMQAVGNGYTRAYLPIVERRKAMVWGERERNFQLYRRGRYVEFNLVWDRGTLFGLQTGGRTESILMSMPPLVRWEYDWQPEAGSPEAALSEFIQVRDWI</sequence>
<accession>B4TCI1</accession>
<gene>
    <name evidence="1" type="primary">hemF</name>
    <name type="ordered locus">SeHA_C2711</name>
</gene>
<feature type="chain" id="PRO_1000119822" description="Oxygen-dependent coproporphyrinogen-III oxidase">
    <location>
        <begin position="1"/>
        <end position="299"/>
    </location>
</feature>
<feature type="region of interest" description="Important for dimerization" evidence="1">
    <location>
        <begin position="240"/>
        <end position="275"/>
    </location>
</feature>
<feature type="active site" description="Proton donor" evidence="1">
    <location>
        <position position="106"/>
    </location>
</feature>
<feature type="binding site" evidence="1">
    <location>
        <position position="92"/>
    </location>
    <ligand>
        <name>substrate</name>
    </ligand>
</feature>
<feature type="binding site" evidence="1">
    <location>
        <position position="96"/>
    </location>
    <ligand>
        <name>a divalent metal cation</name>
        <dbReference type="ChEBI" id="CHEBI:60240"/>
    </ligand>
</feature>
<feature type="binding site" evidence="1">
    <location>
        <position position="106"/>
    </location>
    <ligand>
        <name>a divalent metal cation</name>
        <dbReference type="ChEBI" id="CHEBI:60240"/>
    </ligand>
</feature>
<feature type="binding site" evidence="1">
    <location>
        <begin position="108"/>
        <end position="110"/>
    </location>
    <ligand>
        <name>substrate</name>
    </ligand>
</feature>
<feature type="binding site" evidence="1">
    <location>
        <position position="145"/>
    </location>
    <ligand>
        <name>a divalent metal cation</name>
        <dbReference type="ChEBI" id="CHEBI:60240"/>
    </ligand>
</feature>
<feature type="binding site" evidence="1">
    <location>
        <position position="175"/>
    </location>
    <ligand>
        <name>a divalent metal cation</name>
        <dbReference type="ChEBI" id="CHEBI:60240"/>
    </ligand>
</feature>
<feature type="binding site" evidence="1">
    <location>
        <begin position="258"/>
        <end position="260"/>
    </location>
    <ligand>
        <name>substrate</name>
    </ligand>
</feature>
<feature type="site" description="Important for dimerization" evidence="1">
    <location>
        <position position="175"/>
    </location>
</feature>
<organism>
    <name type="scientific">Salmonella heidelberg (strain SL476)</name>
    <dbReference type="NCBI Taxonomy" id="454169"/>
    <lineage>
        <taxon>Bacteria</taxon>
        <taxon>Pseudomonadati</taxon>
        <taxon>Pseudomonadota</taxon>
        <taxon>Gammaproteobacteria</taxon>
        <taxon>Enterobacterales</taxon>
        <taxon>Enterobacteriaceae</taxon>
        <taxon>Salmonella</taxon>
    </lineage>
</organism>
<dbReference type="EC" id="1.3.3.3" evidence="1"/>
<dbReference type="EMBL" id="CP001120">
    <property type="protein sequence ID" value="ACF65909.1"/>
    <property type="molecule type" value="Genomic_DNA"/>
</dbReference>
<dbReference type="RefSeq" id="WP_000801350.1">
    <property type="nucleotide sequence ID" value="NC_011083.1"/>
</dbReference>
<dbReference type="SMR" id="B4TCI1"/>
<dbReference type="KEGG" id="seh:SeHA_C2711"/>
<dbReference type="HOGENOM" id="CLU_026169_0_1_6"/>
<dbReference type="UniPathway" id="UPA00251">
    <property type="reaction ID" value="UER00322"/>
</dbReference>
<dbReference type="Proteomes" id="UP000001866">
    <property type="component" value="Chromosome"/>
</dbReference>
<dbReference type="GO" id="GO:0005737">
    <property type="term" value="C:cytoplasm"/>
    <property type="evidence" value="ECO:0007669"/>
    <property type="project" value="UniProtKB-SubCell"/>
</dbReference>
<dbReference type="GO" id="GO:0004109">
    <property type="term" value="F:coproporphyrinogen oxidase activity"/>
    <property type="evidence" value="ECO:0007669"/>
    <property type="project" value="UniProtKB-UniRule"/>
</dbReference>
<dbReference type="GO" id="GO:0046872">
    <property type="term" value="F:metal ion binding"/>
    <property type="evidence" value="ECO:0007669"/>
    <property type="project" value="UniProtKB-KW"/>
</dbReference>
<dbReference type="GO" id="GO:0042803">
    <property type="term" value="F:protein homodimerization activity"/>
    <property type="evidence" value="ECO:0000250"/>
    <property type="project" value="UniProtKB"/>
</dbReference>
<dbReference type="GO" id="GO:0006782">
    <property type="term" value="P:protoporphyrinogen IX biosynthetic process"/>
    <property type="evidence" value="ECO:0007669"/>
    <property type="project" value="UniProtKB-UniRule"/>
</dbReference>
<dbReference type="FunFam" id="3.40.1500.10:FF:000001">
    <property type="entry name" value="Oxygen-dependent coproporphyrinogen-III oxidase"/>
    <property type="match status" value="1"/>
</dbReference>
<dbReference type="Gene3D" id="3.40.1500.10">
    <property type="entry name" value="Coproporphyrinogen III oxidase, aerobic"/>
    <property type="match status" value="1"/>
</dbReference>
<dbReference type="HAMAP" id="MF_00333">
    <property type="entry name" value="Coprogen_oxidas"/>
    <property type="match status" value="1"/>
</dbReference>
<dbReference type="InterPro" id="IPR001260">
    <property type="entry name" value="Coprogen_oxidase_aer"/>
</dbReference>
<dbReference type="InterPro" id="IPR036406">
    <property type="entry name" value="Coprogen_oxidase_aer_sf"/>
</dbReference>
<dbReference type="InterPro" id="IPR018375">
    <property type="entry name" value="Coprogen_oxidase_CS"/>
</dbReference>
<dbReference type="NCBIfam" id="NF003727">
    <property type="entry name" value="PRK05330.1"/>
    <property type="match status" value="1"/>
</dbReference>
<dbReference type="PANTHER" id="PTHR10755">
    <property type="entry name" value="COPROPORPHYRINOGEN III OXIDASE, MITOCHONDRIAL"/>
    <property type="match status" value="1"/>
</dbReference>
<dbReference type="PANTHER" id="PTHR10755:SF0">
    <property type="entry name" value="OXYGEN-DEPENDENT COPROPORPHYRINOGEN-III OXIDASE, MITOCHONDRIAL"/>
    <property type="match status" value="1"/>
</dbReference>
<dbReference type="Pfam" id="PF01218">
    <property type="entry name" value="Coprogen_oxidas"/>
    <property type="match status" value="1"/>
</dbReference>
<dbReference type="PIRSF" id="PIRSF000166">
    <property type="entry name" value="Coproporphyri_ox"/>
    <property type="match status" value="1"/>
</dbReference>
<dbReference type="PRINTS" id="PR00073">
    <property type="entry name" value="COPRGNOXDASE"/>
</dbReference>
<dbReference type="SUPFAM" id="SSF102886">
    <property type="entry name" value="Coproporphyrinogen III oxidase"/>
    <property type="match status" value="1"/>
</dbReference>
<dbReference type="PROSITE" id="PS01021">
    <property type="entry name" value="COPROGEN_OXIDASE"/>
    <property type="match status" value="1"/>
</dbReference>
<reference key="1">
    <citation type="journal article" date="2011" name="J. Bacteriol.">
        <title>Comparative genomics of 28 Salmonella enterica isolates: evidence for CRISPR-mediated adaptive sublineage evolution.</title>
        <authorList>
            <person name="Fricke W.F."/>
            <person name="Mammel M.K."/>
            <person name="McDermott P.F."/>
            <person name="Tartera C."/>
            <person name="White D.G."/>
            <person name="Leclerc J.E."/>
            <person name="Ravel J."/>
            <person name="Cebula T.A."/>
        </authorList>
    </citation>
    <scope>NUCLEOTIDE SEQUENCE [LARGE SCALE GENOMIC DNA]</scope>
    <source>
        <strain>SL476</strain>
    </source>
</reference>
<protein>
    <recommendedName>
        <fullName evidence="1">Oxygen-dependent coproporphyrinogen-III oxidase</fullName>
        <shortName evidence="1">CPO</shortName>
        <shortName evidence="1">Coprogen oxidase</shortName>
        <shortName evidence="1">Coproporphyrinogenase</shortName>
        <ecNumber evidence="1">1.3.3.3</ecNumber>
    </recommendedName>
</protein>
<name>HEM6_SALHS</name>
<evidence type="ECO:0000255" key="1">
    <source>
        <dbReference type="HAMAP-Rule" id="MF_00333"/>
    </source>
</evidence>
<proteinExistence type="inferred from homology"/>
<comment type="function">
    <text evidence="1">Involved in the heme biosynthesis. Catalyzes the aerobic oxidative decarboxylation of propionate groups of rings A and B of coproporphyrinogen-III to yield the vinyl groups in protoporphyrinogen-IX.</text>
</comment>
<comment type="catalytic activity">
    <reaction evidence="1">
        <text>coproporphyrinogen III + O2 + 2 H(+) = protoporphyrinogen IX + 2 CO2 + 2 H2O</text>
        <dbReference type="Rhea" id="RHEA:18257"/>
        <dbReference type="ChEBI" id="CHEBI:15377"/>
        <dbReference type="ChEBI" id="CHEBI:15378"/>
        <dbReference type="ChEBI" id="CHEBI:15379"/>
        <dbReference type="ChEBI" id="CHEBI:16526"/>
        <dbReference type="ChEBI" id="CHEBI:57307"/>
        <dbReference type="ChEBI" id="CHEBI:57309"/>
        <dbReference type="EC" id="1.3.3.3"/>
    </reaction>
</comment>
<comment type="cofactor">
    <cofactor evidence="1">
        <name>a divalent metal cation</name>
        <dbReference type="ChEBI" id="CHEBI:60240"/>
    </cofactor>
</comment>
<comment type="pathway">
    <text evidence="1">Porphyrin-containing compound metabolism; protoporphyrin-IX biosynthesis; protoporphyrinogen-IX from coproporphyrinogen-III (O2 route): step 1/1.</text>
</comment>
<comment type="subunit">
    <text evidence="1">Homodimer.</text>
</comment>
<comment type="subcellular location">
    <subcellularLocation>
        <location evidence="1">Cytoplasm</location>
    </subcellularLocation>
</comment>
<comment type="similarity">
    <text evidence="1">Belongs to the aerobic coproporphyrinogen-III oxidase family.</text>
</comment>
<keyword id="KW-0963">Cytoplasm</keyword>
<keyword id="KW-0350">Heme biosynthesis</keyword>
<keyword id="KW-0479">Metal-binding</keyword>
<keyword id="KW-0560">Oxidoreductase</keyword>
<keyword id="KW-0627">Porphyrin biosynthesis</keyword>